<protein>
    <recommendedName>
        <fullName>U3-agatoxin-Ao1b</fullName>
        <shortName>U3-AGTX-Ao1b</shortName>
    </recommendedName>
    <alternativeName>
        <fullName evidence="4">Mu-2Aga_03</fullName>
    </alternativeName>
</protein>
<dbReference type="EMBL" id="AY681327">
    <property type="protein sequence ID" value="AAU87887.1"/>
    <property type="molecule type" value="mRNA"/>
</dbReference>
<dbReference type="SMR" id="Q5Y4V7"/>
<dbReference type="ArachnoServer" id="AS000085">
    <property type="toxin name" value="U3-agatoxin-Ao1b"/>
</dbReference>
<dbReference type="GO" id="GO:0005576">
    <property type="term" value="C:extracellular region"/>
    <property type="evidence" value="ECO:0007669"/>
    <property type="project" value="UniProtKB-SubCell"/>
</dbReference>
<dbReference type="GO" id="GO:0044231">
    <property type="term" value="C:host cell presynaptic membrane"/>
    <property type="evidence" value="ECO:0007669"/>
    <property type="project" value="UniProtKB-KW"/>
</dbReference>
<dbReference type="GO" id="GO:0017080">
    <property type="term" value="F:sodium channel regulator activity"/>
    <property type="evidence" value="ECO:0007669"/>
    <property type="project" value="UniProtKB-KW"/>
</dbReference>
<dbReference type="GO" id="GO:0090729">
    <property type="term" value="F:toxin activity"/>
    <property type="evidence" value="ECO:0007669"/>
    <property type="project" value="UniProtKB-KW"/>
</dbReference>
<dbReference type="InterPro" id="IPR016328">
    <property type="entry name" value="Beta/delta-agatoxin_fam"/>
</dbReference>
<dbReference type="Pfam" id="PF05980">
    <property type="entry name" value="Toxin_7"/>
    <property type="match status" value="1"/>
</dbReference>
<dbReference type="SUPFAM" id="SSF57059">
    <property type="entry name" value="omega toxin-like"/>
    <property type="match status" value="1"/>
</dbReference>
<dbReference type="PROSITE" id="PS60015">
    <property type="entry name" value="MU_AGATOXIN"/>
    <property type="match status" value="1"/>
</dbReference>
<sequence>MKAAISLIIFFAILFVVIEAISYEEGKELFQKERAECVGDGQRCADWAGPYCCSGYYCSCRSMPYCRCRSDSGK</sequence>
<feature type="signal peptide" evidence="2">
    <location>
        <begin position="1"/>
        <end position="20"/>
    </location>
</feature>
<feature type="propeptide" id="PRO_5000093657" evidence="2">
    <location>
        <begin position="21"/>
        <end position="34"/>
    </location>
</feature>
<feature type="chain" id="PRO_5000093658" description="U3-agatoxin-Ao1b">
    <location>
        <begin position="35"/>
        <end position="72"/>
    </location>
</feature>
<feature type="modified residue" description="Serine amide" evidence="1">
    <location>
        <position position="72"/>
    </location>
</feature>
<feature type="disulfide bond" evidence="1">
    <location>
        <begin position="37"/>
        <end position="53"/>
    </location>
</feature>
<feature type="disulfide bond" evidence="1">
    <location>
        <begin position="44"/>
        <end position="58"/>
    </location>
</feature>
<feature type="disulfide bond" evidence="1">
    <location>
        <begin position="52"/>
        <end position="68"/>
    </location>
</feature>
<feature type="disulfide bond" evidence="1">
    <location>
        <begin position="60"/>
        <end position="66"/>
    </location>
</feature>
<proteinExistence type="evidence at transcript level"/>
<organism>
    <name type="scientific">Agelena orientalis</name>
    <name type="common">Funnel-web spider</name>
    <dbReference type="NCBI Taxonomy" id="293813"/>
    <lineage>
        <taxon>Eukaryota</taxon>
        <taxon>Metazoa</taxon>
        <taxon>Ecdysozoa</taxon>
        <taxon>Arthropoda</taxon>
        <taxon>Chelicerata</taxon>
        <taxon>Arachnida</taxon>
        <taxon>Araneae</taxon>
        <taxon>Araneomorphae</taxon>
        <taxon>Entelegynae</taxon>
        <taxon>Agelenidae</taxon>
        <taxon>Agelena</taxon>
    </lineage>
</organism>
<name>T3G1B_AGEOR</name>
<comment type="function">
    <text evidence="1">Insecticidal neurotoxin that induces an irreversible spastic paralysis when injected into insects. Modifies presynaptic voltage-gated sodium channels (Nav), causing them to open at the normal resting potential of the nerve. This leads to spontaneous release of neurotransmitter and repetitive action potentials in motor neurons (By similarity).</text>
</comment>
<comment type="subcellular location">
    <subcellularLocation>
        <location evidence="1">Secreted</location>
    </subcellularLocation>
</comment>
<comment type="tissue specificity">
    <text>Expressed by the venom gland.</text>
</comment>
<comment type="domain">
    <text evidence="1">The presence of a 'disulfide through disulfide knot' structurally defines this protein as a knottin.</text>
</comment>
<comment type="similarity">
    <text evidence="3">Belongs to the neurotoxin 07 (Beta/delta-agtx) family. 02 (aga-3) subfamily.</text>
</comment>
<keyword id="KW-0027">Amidation</keyword>
<keyword id="KW-1015">Disulfide bond</keyword>
<keyword id="KW-0872">Ion channel impairing toxin</keyword>
<keyword id="KW-0960">Knottin</keyword>
<keyword id="KW-0528">Neurotoxin</keyword>
<keyword id="KW-0638">Presynaptic neurotoxin</keyword>
<keyword id="KW-0964">Secreted</keyword>
<keyword id="KW-0732">Signal</keyword>
<keyword id="KW-0800">Toxin</keyword>
<keyword id="KW-0738">Voltage-gated sodium channel impairing toxin</keyword>
<reference key="1">
    <citation type="journal article" date="2005" name="Proteins">
        <title>A novel strategy for the identification of toxinlike structures in spider venom.</title>
        <authorList>
            <person name="Kozlov S.A."/>
            <person name="Malyavka A."/>
            <person name="McCutchen B."/>
            <person name="Lu A."/>
            <person name="Schepers E."/>
            <person name="Herrmann R."/>
            <person name="Grishin E.V."/>
        </authorList>
    </citation>
    <scope>NUCLEOTIDE SEQUENCE [MRNA]</scope>
    <source>
        <tissue>Venom gland</tissue>
    </source>
</reference>
<accession>Q5Y4V7</accession>
<evidence type="ECO:0000250" key="1"/>
<evidence type="ECO:0000255" key="2"/>
<evidence type="ECO:0000305" key="3"/>
<evidence type="ECO:0000312" key="4">
    <source>
        <dbReference type="EMBL" id="AAU87887.1"/>
    </source>
</evidence>